<keyword id="KW-0007">Acetylation</keyword>
<keyword id="KW-0148">Chlorophyll</keyword>
<keyword id="KW-0150">Chloroplast</keyword>
<keyword id="KW-0157">Chromophore</keyword>
<keyword id="KW-0249">Electron transport</keyword>
<keyword id="KW-0408">Iron</keyword>
<keyword id="KW-0460">Magnesium</keyword>
<keyword id="KW-0472">Membrane</keyword>
<keyword id="KW-0479">Metal-binding</keyword>
<keyword id="KW-0560">Oxidoreductase</keyword>
<keyword id="KW-0597">Phosphoprotein</keyword>
<keyword id="KW-0602">Photosynthesis</keyword>
<keyword id="KW-0604">Photosystem II</keyword>
<keyword id="KW-0934">Plastid</keyword>
<keyword id="KW-0793">Thylakoid</keyword>
<keyword id="KW-0812">Transmembrane</keyword>
<keyword id="KW-1133">Transmembrane helix</keyword>
<keyword id="KW-0813">Transport</keyword>
<name>PSBD_HELAN</name>
<proteinExistence type="inferred from homology"/>
<geneLocation type="chloroplast"/>
<dbReference type="EC" id="1.10.3.9" evidence="2"/>
<dbReference type="EMBL" id="DQ383815">
    <property type="protein sequence ID" value="ABD47141.1"/>
    <property type="molecule type" value="Genomic_DNA"/>
</dbReference>
<dbReference type="RefSeq" id="YP_588112.1">
    <property type="nucleotide sequence ID" value="NC_007977.1"/>
</dbReference>
<dbReference type="SMR" id="Q1KXW4"/>
<dbReference type="GeneID" id="4055584"/>
<dbReference type="KEGG" id="han:4055584"/>
<dbReference type="OMA" id="QIFEVAF"/>
<dbReference type="OrthoDB" id="1924410at2759"/>
<dbReference type="PhylomeDB" id="Q1KXW4"/>
<dbReference type="GO" id="GO:0009535">
    <property type="term" value="C:chloroplast thylakoid membrane"/>
    <property type="evidence" value="ECO:0007669"/>
    <property type="project" value="UniProtKB-SubCell"/>
</dbReference>
<dbReference type="GO" id="GO:0009523">
    <property type="term" value="C:photosystem II"/>
    <property type="evidence" value="ECO:0007669"/>
    <property type="project" value="UniProtKB-KW"/>
</dbReference>
<dbReference type="GO" id="GO:0016168">
    <property type="term" value="F:chlorophyll binding"/>
    <property type="evidence" value="ECO:0007669"/>
    <property type="project" value="UniProtKB-UniRule"/>
</dbReference>
<dbReference type="GO" id="GO:0045156">
    <property type="term" value="F:electron transporter, transferring electrons within the cyclic electron transport pathway of photosynthesis activity"/>
    <property type="evidence" value="ECO:0007669"/>
    <property type="project" value="InterPro"/>
</dbReference>
<dbReference type="GO" id="GO:0005506">
    <property type="term" value="F:iron ion binding"/>
    <property type="evidence" value="ECO:0007669"/>
    <property type="project" value="UniProtKB-UniRule"/>
</dbReference>
<dbReference type="GO" id="GO:0010242">
    <property type="term" value="F:oxygen evolving activity"/>
    <property type="evidence" value="ECO:0007669"/>
    <property type="project" value="UniProtKB-EC"/>
</dbReference>
<dbReference type="GO" id="GO:0009772">
    <property type="term" value="P:photosynthetic electron transport in photosystem II"/>
    <property type="evidence" value="ECO:0007669"/>
    <property type="project" value="InterPro"/>
</dbReference>
<dbReference type="CDD" id="cd09288">
    <property type="entry name" value="Photosystem-II_D2"/>
    <property type="match status" value="1"/>
</dbReference>
<dbReference type="FunFam" id="1.20.85.10:FF:000001">
    <property type="entry name" value="photosystem II D2 protein-like"/>
    <property type="match status" value="1"/>
</dbReference>
<dbReference type="Gene3D" id="1.20.85.10">
    <property type="entry name" value="Photosystem II protein D1-like"/>
    <property type="match status" value="1"/>
</dbReference>
<dbReference type="HAMAP" id="MF_01383">
    <property type="entry name" value="PSII_PsbD_D2"/>
    <property type="match status" value="1"/>
</dbReference>
<dbReference type="InterPro" id="IPR055266">
    <property type="entry name" value="D1/D2"/>
</dbReference>
<dbReference type="InterPro" id="IPR036854">
    <property type="entry name" value="Photo_II_D1/D2_sf"/>
</dbReference>
<dbReference type="InterPro" id="IPR000484">
    <property type="entry name" value="Photo_RC_L/M"/>
</dbReference>
<dbReference type="InterPro" id="IPR055265">
    <property type="entry name" value="Photo_RC_L/M_CS"/>
</dbReference>
<dbReference type="InterPro" id="IPR005868">
    <property type="entry name" value="PSII_PsbD/D2"/>
</dbReference>
<dbReference type="NCBIfam" id="TIGR01152">
    <property type="entry name" value="psbD"/>
    <property type="match status" value="1"/>
</dbReference>
<dbReference type="PANTHER" id="PTHR33149:SF12">
    <property type="entry name" value="PHOTOSYSTEM II D2 PROTEIN"/>
    <property type="match status" value="1"/>
</dbReference>
<dbReference type="PANTHER" id="PTHR33149">
    <property type="entry name" value="PHOTOSYSTEM II PROTEIN D1"/>
    <property type="match status" value="1"/>
</dbReference>
<dbReference type="Pfam" id="PF00124">
    <property type="entry name" value="Photo_RC"/>
    <property type="match status" value="1"/>
</dbReference>
<dbReference type="PRINTS" id="PR00256">
    <property type="entry name" value="REACTNCENTRE"/>
</dbReference>
<dbReference type="SUPFAM" id="SSF81483">
    <property type="entry name" value="Bacterial photosystem II reaction centre, L and M subunits"/>
    <property type="match status" value="1"/>
</dbReference>
<dbReference type="PROSITE" id="PS00244">
    <property type="entry name" value="REACTION_CENTER"/>
    <property type="match status" value="1"/>
</dbReference>
<evidence type="ECO:0000250" key="1">
    <source>
        <dbReference type="UniProtKB" id="P56761"/>
    </source>
</evidence>
<evidence type="ECO:0000255" key="2">
    <source>
        <dbReference type="HAMAP-Rule" id="MF_01383"/>
    </source>
</evidence>
<sequence>MTIALGKFTKDENDLFDIMDDWLRRDRFVFVGWSGLLLFPCAYFAVGGWFTGTTFVTSWYTHGLASSYLEGCNFLTAAVSTPANSLAHSLLLLWGPEAQGDFTRWCQLGGLWTFVALHGAFGLIGFMLRQFELARSVQLRPYNAIAFSGPIAVFVSVFLIYPLGQSGWFFAPSFGVAAIFRFILFFQGFHNWTLNPFHMMGVAGVLGAALLCAIHGATVENTLFEDGDGANTFRAFNPTQAEETYSMVTANRFWSQIFGVAFSNKRWLHFFMLFVPVTGLWMSALGVVGLALNLRAYDFVSQEIRAAEDPEFETFYTKNILLNEGIRAWMAAQDQPHENLIFPEEVLPRGNAL</sequence>
<reference key="1">
    <citation type="submission" date="2006-01" db="EMBL/GenBank/DDBJ databases">
        <title>A comparison of the first two published chloroplast genomes in Asteraceae: Lactuca and Helianthus.</title>
        <authorList>
            <person name="Timme R.E."/>
            <person name="Kuehl J.V."/>
            <person name="Boore J.L."/>
            <person name="Jansen R.K."/>
        </authorList>
    </citation>
    <scope>NUCLEOTIDE SEQUENCE [LARGE SCALE GENOMIC DNA]</scope>
    <source>
        <strain>cv. HA383</strain>
    </source>
</reference>
<organism>
    <name type="scientific">Helianthus annuus</name>
    <name type="common">Common sunflower</name>
    <dbReference type="NCBI Taxonomy" id="4232"/>
    <lineage>
        <taxon>Eukaryota</taxon>
        <taxon>Viridiplantae</taxon>
        <taxon>Streptophyta</taxon>
        <taxon>Embryophyta</taxon>
        <taxon>Tracheophyta</taxon>
        <taxon>Spermatophyta</taxon>
        <taxon>Magnoliopsida</taxon>
        <taxon>eudicotyledons</taxon>
        <taxon>Gunneridae</taxon>
        <taxon>Pentapetalae</taxon>
        <taxon>asterids</taxon>
        <taxon>campanulids</taxon>
        <taxon>Asterales</taxon>
        <taxon>Asteraceae</taxon>
        <taxon>Asteroideae</taxon>
        <taxon>Heliantheae alliance</taxon>
        <taxon>Heliantheae</taxon>
        <taxon>Helianthus</taxon>
    </lineage>
</organism>
<accession>Q1KXW4</accession>
<protein>
    <recommendedName>
        <fullName evidence="2">Photosystem II D2 protein</fullName>
        <shortName evidence="2">PSII D2 protein</shortName>
        <ecNumber evidence="2">1.10.3.9</ecNumber>
    </recommendedName>
    <alternativeName>
        <fullName evidence="2">Photosystem Q(A) protein</fullName>
    </alternativeName>
</protein>
<comment type="function">
    <text evidence="2">Photosystem II (PSII) is a light-driven water:plastoquinone oxidoreductase that uses light energy to abstract electrons from H(2)O, generating O(2) and a proton gradient subsequently used for ATP formation. It consists of a core antenna complex that captures photons, and an electron transfer chain that converts photonic excitation into a charge separation. The D1/D2 (PsbA/PsbD) reaction center heterodimer binds P680, the primary electron donor of PSII as well as several subsequent electron acceptors. D2 is needed for assembly of a stable PSII complex.</text>
</comment>
<comment type="catalytic activity">
    <reaction evidence="2">
        <text>2 a plastoquinone + 4 hnu + 2 H2O = 2 a plastoquinol + O2</text>
        <dbReference type="Rhea" id="RHEA:36359"/>
        <dbReference type="Rhea" id="RHEA-COMP:9561"/>
        <dbReference type="Rhea" id="RHEA-COMP:9562"/>
        <dbReference type="ChEBI" id="CHEBI:15377"/>
        <dbReference type="ChEBI" id="CHEBI:15379"/>
        <dbReference type="ChEBI" id="CHEBI:17757"/>
        <dbReference type="ChEBI" id="CHEBI:30212"/>
        <dbReference type="ChEBI" id="CHEBI:62192"/>
        <dbReference type="EC" id="1.10.3.9"/>
    </reaction>
</comment>
<comment type="cofactor">
    <text evidence="2">The D1/D2 heterodimer binds P680, chlorophylls that are the primary electron donor of PSII, and subsequent electron acceptors. It shares a non-heme iron and each subunit binds pheophytin, quinone, additional chlorophylls, carotenoids and lipids. There is also a Cl(-1) ion associated with D1 and D2, which is required for oxygen evolution. The PSII complex binds additional chlorophylls, carotenoids and specific lipids.</text>
</comment>
<comment type="subunit">
    <text evidence="2">PSII is composed of 1 copy each of membrane proteins PsbA, PsbB, PsbC, PsbD, PsbE, PsbF, PsbH, PsbI, PsbJ, PsbK, PsbL, PsbM, PsbT, PsbX, PsbY, PsbZ, Psb30/Ycf12, at least 3 peripheral proteins of the oxygen-evolving complex and a large number of cofactors. It forms dimeric complexes.</text>
</comment>
<comment type="subcellular location">
    <subcellularLocation>
        <location evidence="2">Plastid</location>
        <location evidence="2">Chloroplast thylakoid membrane</location>
        <topology evidence="2">Multi-pass membrane protein</topology>
    </subcellularLocation>
</comment>
<comment type="miscellaneous">
    <text evidence="2">2 of the reaction center chlorophylls (ChlD1 and ChlD2) are entirely coordinated by water.</text>
</comment>
<comment type="similarity">
    <text evidence="2">Belongs to the reaction center PufL/M/PsbA/D family.</text>
</comment>
<feature type="initiator methionine" description="Removed" evidence="1">
    <location>
        <position position="1"/>
    </location>
</feature>
<feature type="chain" id="PRO_0000359656" description="Photosystem II D2 protein">
    <location>
        <begin position="2"/>
        <end position="353"/>
    </location>
</feature>
<feature type="transmembrane region" description="Helical" evidence="2">
    <location>
        <begin position="41"/>
        <end position="61"/>
    </location>
</feature>
<feature type="transmembrane region" description="Helical" evidence="2">
    <location>
        <begin position="125"/>
        <end position="141"/>
    </location>
</feature>
<feature type="transmembrane region" description="Helical" evidence="2">
    <location>
        <begin position="153"/>
        <end position="166"/>
    </location>
</feature>
<feature type="transmembrane region" description="Helical" evidence="2">
    <location>
        <begin position="208"/>
        <end position="228"/>
    </location>
</feature>
<feature type="transmembrane region" description="Helical" evidence="2">
    <location>
        <begin position="279"/>
        <end position="295"/>
    </location>
</feature>
<feature type="binding site" description="axial binding residue" evidence="2">
    <location>
        <position position="118"/>
    </location>
    <ligand>
        <name>chlorophyll a</name>
        <dbReference type="ChEBI" id="CHEBI:58416"/>
        <label>ChlzD2</label>
    </ligand>
    <ligandPart>
        <name>Mg</name>
        <dbReference type="ChEBI" id="CHEBI:25107"/>
    </ligandPart>
</feature>
<feature type="binding site" evidence="2">
    <location>
        <position position="130"/>
    </location>
    <ligand>
        <name>pheophytin a</name>
        <dbReference type="ChEBI" id="CHEBI:136840"/>
        <label>D2</label>
    </ligand>
</feature>
<feature type="binding site" evidence="2">
    <location>
        <position position="143"/>
    </location>
    <ligand>
        <name>pheophytin a</name>
        <dbReference type="ChEBI" id="CHEBI:136840"/>
        <label>D2</label>
    </ligand>
</feature>
<feature type="binding site" description="axial binding residue" evidence="2">
    <location>
        <position position="198"/>
    </location>
    <ligand>
        <name>chlorophyll a</name>
        <dbReference type="ChEBI" id="CHEBI:58416"/>
        <label>PD2</label>
    </ligand>
    <ligandPart>
        <name>Mg</name>
        <dbReference type="ChEBI" id="CHEBI:25107"/>
    </ligandPart>
</feature>
<feature type="binding site" evidence="2">
    <location>
        <position position="215"/>
    </location>
    <ligand>
        <name>a plastoquinone</name>
        <dbReference type="ChEBI" id="CHEBI:17757"/>
        <label>Q(A)</label>
    </ligand>
</feature>
<feature type="binding site" evidence="2">
    <location>
        <position position="215"/>
    </location>
    <ligand>
        <name>Fe cation</name>
        <dbReference type="ChEBI" id="CHEBI:24875"/>
        <note>ligand shared with heterodimeric partner</note>
    </ligand>
</feature>
<feature type="binding site" evidence="2">
    <location>
        <position position="262"/>
    </location>
    <ligand>
        <name>a plastoquinone</name>
        <dbReference type="ChEBI" id="CHEBI:17757"/>
        <label>Q(A)</label>
    </ligand>
</feature>
<feature type="binding site" evidence="2">
    <location>
        <position position="269"/>
    </location>
    <ligand>
        <name>Fe cation</name>
        <dbReference type="ChEBI" id="CHEBI:24875"/>
        <note>ligand shared with heterodimeric partner</note>
    </ligand>
</feature>
<feature type="modified residue" description="N-acetylthreonine" evidence="1">
    <location>
        <position position="2"/>
    </location>
</feature>
<feature type="modified residue" description="Phosphothreonine" evidence="1">
    <location>
        <position position="2"/>
    </location>
</feature>
<gene>
    <name evidence="2" type="primary">psbD</name>
</gene>